<keyword id="KW-1217">Cell adhesion impairing toxin</keyword>
<keyword id="KW-0903">Direct protein sequencing</keyword>
<keyword id="KW-1015">Disulfide bond</keyword>
<keyword id="KW-1199">Hemostasis impairing toxin</keyword>
<keyword id="KW-1201">Platelet aggregation inhibiting toxin</keyword>
<keyword id="KW-0964">Secreted</keyword>
<keyword id="KW-0800">Toxin</keyword>
<accession>P31986</accession>
<evidence type="ECO:0000250" key="1"/>
<evidence type="ECO:0000250" key="2">
    <source>
        <dbReference type="UniProtKB" id="Q0NZX5"/>
    </source>
</evidence>
<evidence type="ECO:0000255" key="3">
    <source>
        <dbReference type="PROSITE-ProRule" id="PRU00068"/>
    </source>
</evidence>
<evidence type="ECO:0000269" key="4">
    <source>
    </source>
</evidence>
<evidence type="ECO:0000303" key="5">
    <source>
    </source>
</evidence>
<evidence type="ECO:0000305" key="6"/>
<evidence type="ECO:0000305" key="7">
    <source>
    </source>
</evidence>
<reference key="1">
    <citation type="journal article" date="1993" name="J. Biol. Chem.">
        <title>Characterization of the integrin specificities of disintegrins isolated from American pit viper venoms.</title>
        <authorList>
            <person name="Scarborough R.M."/>
            <person name="Rose J.W."/>
            <person name="Naughton M.A."/>
            <person name="Phillips D.R."/>
            <person name="Nannizzi L."/>
            <person name="Arfsten A."/>
            <person name="Campbell A.M."/>
            <person name="Charo I.F."/>
        </authorList>
    </citation>
    <scope>PROTEIN SEQUENCE</scope>
    <scope>SUBCELLULAR LOCATION</scope>
    <source>
        <tissue>Venom</tissue>
    </source>
</reference>
<comment type="function">
    <text>Inhibits fibrinogen interaction with platelets. Acts by binding to alpha-IIb/beta-3 (ITGA2B/ITGB3) on the platelet surface and inhibits aggregation induced by ADP, thrombin, platelet-activating factor and collagen.</text>
</comment>
<comment type="subunit">
    <text evidence="1">Monomer (disintegrin).</text>
</comment>
<comment type="subcellular location">
    <subcellularLocation>
        <location evidence="4">Secreted</location>
    </subcellularLocation>
</comment>
<comment type="tissue specificity">
    <text evidence="7">Expressed by the venom gland.</text>
</comment>
<comment type="miscellaneous">
    <text>The disintegrin belongs to the medium disintegrin subfamily.</text>
</comment>
<comment type="similarity">
    <text evidence="6">Belongs to the venom metalloproteinase (M12B) family. P-II subfamily. P-IIa sub-subfamily.</text>
</comment>
<proteinExistence type="evidence at protein level"/>
<sequence length="73" mass="7653">EAGEECDCGSPANPCCDAATCKLRPGAQCADGLCCDQCRFIKKGTVCRVARGDWNDDTCTGQSADCPRNGLYG</sequence>
<name>VM2I_CROLT</name>
<organism>
    <name type="scientific">Crotalus lutosus</name>
    <name type="common">Great basin rattlesnake</name>
    <name type="synonym">Crotalus oreganus lutosus</name>
    <dbReference type="NCBI Taxonomy" id="332626"/>
    <lineage>
        <taxon>Eukaryota</taxon>
        <taxon>Metazoa</taxon>
        <taxon>Chordata</taxon>
        <taxon>Craniata</taxon>
        <taxon>Vertebrata</taxon>
        <taxon>Euteleostomi</taxon>
        <taxon>Lepidosauria</taxon>
        <taxon>Squamata</taxon>
        <taxon>Bifurcata</taxon>
        <taxon>Unidentata</taxon>
        <taxon>Episquamata</taxon>
        <taxon>Toxicofera</taxon>
        <taxon>Serpentes</taxon>
        <taxon>Colubroidea</taxon>
        <taxon>Viperidae</taxon>
        <taxon>Crotalinae</taxon>
        <taxon>Crotalus</taxon>
    </lineage>
</organism>
<dbReference type="PIR" id="C43019">
    <property type="entry name" value="C43019"/>
</dbReference>
<dbReference type="SMR" id="P31986"/>
<dbReference type="GO" id="GO:0005576">
    <property type="term" value="C:extracellular region"/>
    <property type="evidence" value="ECO:0007669"/>
    <property type="project" value="UniProtKB-SubCell"/>
</dbReference>
<dbReference type="GO" id="GO:0005886">
    <property type="term" value="C:plasma membrane"/>
    <property type="evidence" value="ECO:0007669"/>
    <property type="project" value="TreeGrafter"/>
</dbReference>
<dbReference type="GO" id="GO:0090729">
    <property type="term" value="F:toxin activity"/>
    <property type="evidence" value="ECO:0007669"/>
    <property type="project" value="UniProtKB-KW"/>
</dbReference>
<dbReference type="FunFam" id="4.10.70.10:FF:000005">
    <property type="entry name" value="Zinc metalloproteinase/disintegrin"/>
    <property type="match status" value="1"/>
</dbReference>
<dbReference type="Gene3D" id="4.10.70.10">
    <property type="entry name" value="Disintegrin domain"/>
    <property type="match status" value="1"/>
</dbReference>
<dbReference type="InterPro" id="IPR018358">
    <property type="entry name" value="Disintegrin_CS"/>
</dbReference>
<dbReference type="InterPro" id="IPR001762">
    <property type="entry name" value="Disintegrin_dom"/>
</dbReference>
<dbReference type="InterPro" id="IPR036436">
    <property type="entry name" value="Disintegrin_dom_sf"/>
</dbReference>
<dbReference type="PANTHER" id="PTHR11905">
    <property type="entry name" value="ADAM A DISINTEGRIN AND METALLOPROTEASE DOMAIN"/>
    <property type="match status" value="1"/>
</dbReference>
<dbReference type="PANTHER" id="PTHR11905:SF32">
    <property type="entry name" value="DISINTEGRIN AND METALLOPROTEINASE DOMAIN-CONTAINING PROTEIN 28"/>
    <property type="match status" value="1"/>
</dbReference>
<dbReference type="Pfam" id="PF00200">
    <property type="entry name" value="Disintegrin"/>
    <property type="match status" value="1"/>
</dbReference>
<dbReference type="PRINTS" id="PR00289">
    <property type="entry name" value="DISINTEGRIN"/>
</dbReference>
<dbReference type="SMART" id="SM00050">
    <property type="entry name" value="DISIN"/>
    <property type="match status" value="1"/>
</dbReference>
<dbReference type="SUPFAM" id="SSF57552">
    <property type="entry name" value="Blood coagulation inhibitor (disintegrin)"/>
    <property type="match status" value="1"/>
</dbReference>
<dbReference type="PROSITE" id="PS00427">
    <property type="entry name" value="DISINTEGRIN_1"/>
    <property type="match status" value="1"/>
</dbReference>
<dbReference type="PROSITE" id="PS50214">
    <property type="entry name" value="DISINTEGRIN_2"/>
    <property type="match status" value="1"/>
</dbReference>
<protein>
    <recommendedName>
        <fullName evidence="5">Disintegrin lutosin</fullName>
    </recommendedName>
    <alternativeName>
        <fullName>Platelet aggregation activation inhibitor</fullName>
    </alternativeName>
</protein>
<feature type="chain" id="PRO_0000101796" description="Disintegrin lutosin" evidence="4">
    <location>
        <begin position="1"/>
        <end position="73"/>
    </location>
</feature>
<feature type="domain" description="Disintegrin" evidence="3">
    <location>
        <begin position="1"/>
        <end position="73"/>
    </location>
</feature>
<feature type="short sequence motif" description="Cell attachment site">
    <location>
        <begin position="51"/>
        <end position="53"/>
    </location>
</feature>
<feature type="disulfide bond" evidence="2">
    <location>
        <begin position="6"/>
        <end position="21"/>
    </location>
</feature>
<feature type="disulfide bond" evidence="2">
    <location>
        <begin position="8"/>
        <end position="16"/>
    </location>
</feature>
<feature type="disulfide bond" evidence="2">
    <location>
        <begin position="15"/>
        <end position="38"/>
    </location>
</feature>
<feature type="disulfide bond" evidence="2">
    <location>
        <begin position="29"/>
        <end position="35"/>
    </location>
</feature>
<feature type="disulfide bond" evidence="2">
    <location>
        <begin position="34"/>
        <end position="59"/>
    </location>
</feature>
<feature type="disulfide bond" evidence="2 3">
    <location>
        <begin position="47"/>
        <end position="66"/>
    </location>
</feature>